<gene>
    <name evidence="1" type="primary">rimO</name>
    <name type="ordered locus">PSPTO_4019</name>
</gene>
<reference key="1">
    <citation type="journal article" date="2003" name="Proc. Natl. Acad. Sci. U.S.A.">
        <title>The complete genome sequence of the Arabidopsis and tomato pathogen Pseudomonas syringae pv. tomato DC3000.</title>
        <authorList>
            <person name="Buell C.R."/>
            <person name="Joardar V."/>
            <person name="Lindeberg M."/>
            <person name="Selengut J."/>
            <person name="Paulsen I.T."/>
            <person name="Gwinn M.L."/>
            <person name="Dodson R.J."/>
            <person name="DeBoy R.T."/>
            <person name="Durkin A.S."/>
            <person name="Kolonay J.F."/>
            <person name="Madupu R."/>
            <person name="Daugherty S.C."/>
            <person name="Brinkac L.M."/>
            <person name="Beanan M.J."/>
            <person name="Haft D.H."/>
            <person name="Nelson W.C."/>
            <person name="Davidsen T.M."/>
            <person name="Zafar N."/>
            <person name="Zhou L."/>
            <person name="Liu J."/>
            <person name="Yuan Q."/>
            <person name="Khouri H.M."/>
            <person name="Fedorova N.B."/>
            <person name="Tran B."/>
            <person name="Russell D."/>
            <person name="Berry K.J."/>
            <person name="Utterback T.R."/>
            <person name="Van Aken S.E."/>
            <person name="Feldblyum T.V."/>
            <person name="D'Ascenzo M."/>
            <person name="Deng W.-L."/>
            <person name="Ramos A.R."/>
            <person name="Alfano J.R."/>
            <person name="Cartinhour S."/>
            <person name="Chatterjee A.K."/>
            <person name="Delaney T.P."/>
            <person name="Lazarowitz S.G."/>
            <person name="Martin G.B."/>
            <person name="Schneider D.J."/>
            <person name="Tang X."/>
            <person name="Bender C.L."/>
            <person name="White O."/>
            <person name="Fraser C.M."/>
            <person name="Collmer A."/>
        </authorList>
    </citation>
    <scope>NUCLEOTIDE SEQUENCE [LARGE SCALE GENOMIC DNA]</scope>
    <source>
        <strain>ATCC BAA-871 / DC3000</strain>
    </source>
</reference>
<name>RIMO_PSESM</name>
<sequence>MTAKAPRVGMISLGCPKALVDSERILTQLRMEGYEVVATYEDADVVVVNTCGFIDTAKAESLEVIGEAIKENGKVIVTGCMGVDASVIRAVHPSVLSVTGPQQYEQVVNAVHDVVPPRKDHNPLIDLVPPQGVKLTPRHYAYLKISEGCNHSCSFCIIPSMRGKLVSRPVGDVLDEAKRLVKSGVKELLVISQDTSAYGVDVKYRTGFWDGQPVKTRMTELCQALGSMGVWVRLHYVYPYPHVDELIPLMAAGKILPYLDIPFQHASPKILKLMKRPAFEDKTLARIKNWREQCPDLIIRSTFIVGFPGETEEDFQYLLDWLTEAQLDRVGCFQYSPVEGAPANLLDAAIVPDDVKQDRWDRFMAHQQAISAARLQMKIGKEIEVLIDEVDDRGAVGRCFFDAPEIDGNVFIGLEDGSTVQPGDKIMCRVTDADEYDLWAEML</sequence>
<proteinExistence type="inferred from homology"/>
<evidence type="ECO:0000255" key="1">
    <source>
        <dbReference type="HAMAP-Rule" id="MF_01865"/>
    </source>
</evidence>
<evidence type="ECO:0000255" key="2">
    <source>
        <dbReference type="PROSITE-ProRule" id="PRU01266"/>
    </source>
</evidence>
<accession>Q87Y01</accession>
<comment type="function">
    <text evidence="1">Catalyzes the methylthiolation of an aspartic acid residue of ribosomal protein uS12.</text>
</comment>
<comment type="catalytic activity">
    <reaction evidence="1">
        <text>L-aspartate(89)-[ribosomal protein uS12]-hydrogen + (sulfur carrier)-SH + AH2 + 2 S-adenosyl-L-methionine = 3-methylsulfanyl-L-aspartate(89)-[ribosomal protein uS12]-hydrogen + (sulfur carrier)-H + 5'-deoxyadenosine + L-methionine + A + S-adenosyl-L-homocysteine + 2 H(+)</text>
        <dbReference type="Rhea" id="RHEA:37087"/>
        <dbReference type="Rhea" id="RHEA-COMP:10460"/>
        <dbReference type="Rhea" id="RHEA-COMP:10461"/>
        <dbReference type="Rhea" id="RHEA-COMP:14737"/>
        <dbReference type="Rhea" id="RHEA-COMP:14739"/>
        <dbReference type="ChEBI" id="CHEBI:13193"/>
        <dbReference type="ChEBI" id="CHEBI:15378"/>
        <dbReference type="ChEBI" id="CHEBI:17319"/>
        <dbReference type="ChEBI" id="CHEBI:17499"/>
        <dbReference type="ChEBI" id="CHEBI:29917"/>
        <dbReference type="ChEBI" id="CHEBI:29961"/>
        <dbReference type="ChEBI" id="CHEBI:57844"/>
        <dbReference type="ChEBI" id="CHEBI:57856"/>
        <dbReference type="ChEBI" id="CHEBI:59789"/>
        <dbReference type="ChEBI" id="CHEBI:64428"/>
        <dbReference type="ChEBI" id="CHEBI:73599"/>
        <dbReference type="EC" id="2.8.4.4"/>
    </reaction>
</comment>
<comment type="cofactor">
    <cofactor evidence="1">
        <name>[4Fe-4S] cluster</name>
        <dbReference type="ChEBI" id="CHEBI:49883"/>
    </cofactor>
    <text evidence="1">Binds 2 [4Fe-4S] clusters. One cluster is coordinated with 3 cysteines and an exchangeable S-adenosyl-L-methionine.</text>
</comment>
<comment type="subcellular location">
    <subcellularLocation>
        <location evidence="1">Cytoplasm</location>
    </subcellularLocation>
</comment>
<comment type="similarity">
    <text evidence="1">Belongs to the methylthiotransferase family. RimO subfamily.</text>
</comment>
<keyword id="KW-0004">4Fe-4S</keyword>
<keyword id="KW-0963">Cytoplasm</keyword>
<keyword id="KW-0408">Iron</keyword>
<keyword id="KW-0411">Iron-sulfur</keyword>
<keyword id="KW-0479">Metal-binding</keyword>
<keyword id="KW-1185">Reference proteome</keyword>
<keyword id="KW-0949">S-adenosyl-L-methionine</keyword>
<keyword id="KW-0808">Transferase</keyword>
<organism>
    <name type="scientific">Pseudomonas syringae pv. tomato (strain ATCC BAA-871 / DC3000)</name>
    <dbReference type="NCBI Taxonomy" id="223283"/>
    <lineage>
        <taxon>Bacteria</taxon>
        <taxon>Pseudomonadati</taxon>
        <taxon>Pseudomonadota</taxon>
        <taxon>Gammaproteobacteria</taxon>
        <taxon>Pseudomonadales</taxon>
        <taxon>Pseudomonadaceae</taxon>
        <taxon>Pseudomonas</taxon>
    </lineage>
</organism>
<protein>
    <recommendedName>
        <fullName evidence="1">Ribosomal protein uS12 methylthiotransferase RimO</fullName>
        <shortName evidence="1">uS12 MTTase</shortName>
        <shortName evidence="1">uS12 methylthiotransferase</shortName>
        <ecNumber evidence="1">2.8.4.4</ecNumber>
    </recommendedName>
    <alternativeName>
        <fullName evidence="1">Ribosomal protein uS12 (aspartate-C(3))-methylthiotransferase</fullName>
    </alternativeName>
    <alternativeName>
        <fullName evidence="1">Ribosome maturation factor RimO</fullName>
    </alternativeName>
</protein>
<dbReference type="EC" id="2.8.4.4" evidence="1"/>
<dbReference type="EMBL" id="AE016853">
    <property type="protein sequence ID" value="AAO57476.1"/>
    <property type="molecule type" value="Genomic_DNA"/>
</dbReference>
<dbReference type="RefSeq" id="NP_793781.1">
    <property type="nucleotide sequence ID" value="NC_004578.1"/>
</dbReference>
<dbReference type="RefSeq" id="WP_011104834.1">
    <property type="nucleotide sequence ID" value="NC_004578.1"/>
</dbReference>
<dbReference type="SMR" id="Q87Y01"/>
<dbReference type="STRING" id="223283.PSPTO_4019"/>
<dbReference type="GeneID" id="1185698"/>
<dbReference type="KEGG" id="pst:PSPTO_4019"/>
<dbReference type="PATRIC" id="fig|223283.9.peg.4122"/>
<dbReference type="eggNOG" id="COG0621">
    <property type="taxonomic scope" value="Bacteria"/>
</dbReference>
<dbReference type="HOGENOM" id="CLU_018697_0_0_6"/>
<dbReference type="OrthoDB" id="9805215at2"/>
<dbReference type="PhylomeDB" id="Q87Y01"/>
<dbReference type="Proteomes" id="UP000002515">
    <property type="component" value="Chromosome"/>
</dbReference>
<dbReference type="GO" id="GO:0005829">
    <property type="term" value="C:cytosol"/>
    <property type="evidence" value="ECO:0007669"/>
    <property type="project" value="TreeGrafter"/>
</dbReference>
<dbReference type="GO" id="GO:0051539">
    <property type="term" value="F:4 iron, 4 sulfur cluster binding"/>
    <property type="evidence" value="ECO:0007669"/>
    <property type="project" value="UniProtKB-UniRule"/>
</dbReference>
<dbReference type="GO" id="GO:0035599">
    <property type="term" value="F:aspartic acid methylthiotransferase activity"/>
    <property type="evidence" value="ECO:0007669"/>
    <property type="project" value="TreeGrafter"/>
</dbReference>
<dbReference type="GO" id="GO:0046872">
    <property type="term" value="F:metal ion binding"/>
    <property type="evidence" value="ECO:0007669"/>
    <property type="project" value="UniProtKB-KW"/>
</dbReference>
<dbReference type="GO" id="GO:0103039">
    <property type="term" value="F:protein methylthiotransferase activity"/>
    <property type="evidence" value="ECO:0007669"/>
    <property type="project" value="UniProtKB-EC"/>
</dbReference>
<dbReference type="GO" id="GO:0006400">
    <property type="term" value="P:tRNA modification"/>
    <property type="evidence" value="ECO:0007669"/>
    <property type="project" value="InterPro"/>
</dbReference>
<dbReference type="CDD" id="cd01335">
    <property type="entry name" value="Radical_SAM"/>
    <property type="match status" value="1"/>
</dbReference>
<dbReference type="FunFam" id="2.40.50.140:FF:000060">
    <property type="entry name" value="Ribosomal protein S12 methylthiotransferase RimO"/>
    <property type="match status" value="1"/>
</dbReference>
<dbReference type="FunFam" id="3.40.50.12160:FF:000002">
    <property type="entry name" value="Ribosomal protein S12 methylthiotransferase RimO"/>
    <property type="match status" value="1"/>
</dbReference>
<dbReference type="FunFam" id="3.80.30.20:FF:000001">
    <property type="entry name" value="tRNA-2-methylthio-N(6)-dimethylallyladenosine synthase 2"/>
    <property type="match status" value="1"/>
</dbReference>
<dbReference type="Gene3D" id="3.40.50.12160">
    <property type="entry name" value="Methylthiotransferase, N-terminal domain"/>
    <property type="match status" value="1"/>
</dbReference>
<dbReference type="Gene3D" id="2.40.50.140">
    <property type="entry name" value="Nucleic acid-binding proteins"/>
    <property type="match status" value="1"/>
</dbReference>
<dbReference type="Gene3D" id="3.80.30.20">
    <property type="entry name" value="tm_1862 like domain"/>
    <property type="match status" value="1"/>
</dbReference>
<dbReference type="HAMAP" id="MF_01865">
    <property type="entry name" value="MTTase_RimO"/>
    <property type="match status" value="1"/>
</dbReference>
<dbReference type="InterPro" id="IPR006638">
    <property type="entry name" value="Elp3/MiaA/NifB-like_rSAM"/>
</dbReference>
<dbReference type="InterPro" id="IPR005839">
    <property type="entry name" value="Methylthiotransferase"/>
</dbReference>
<dbReference type="InterPro" id="IPR020612">
    <property type="entry name" value="Methylthiotransferase_CS"/>
</dbReference>
<dbReference type="InterPro" id="IPR013848">
    <property type="entry name" value="Methylthiotransferase_N"/>
</dbReference>
<dbReference type="InterPro" id="IPR038135">
    <property type="entry name" value="Methylthiotransferase_N_sf"/>
</dbReference>
<dbReference type="InterPro" id="IPR012340">
    <property type="entry name" value="NA-bd_OB-fold"/>
</dbReference>
<dbReference type="InterPro" id="IPR005840">
    <property type="entry name" value="Ribosomal_uS12_MeSTrfase_RimO"/>
</dbReference>
<dbReference type="InterPro" id="IPR007197">
    <property type="entry name" value="rSAM"/>
</dbReference>
<dbReference type="InterPro" id="IPR023404">
    <property type="entry name" value="rSAM_horseshoe"/>
</dbReference>
<dbReference type="InterPro" id="IPR002792">
    <property type="entry name" value="TRAM_dom"/>
</dbReference>
<dbReference type="NCBIfam" id="TIGR01125">
    <property type="entry name" value="30S ribosomal protein S12 methylthiotransferase RimO"/>
    <property type="match status" value="1"/>
</dbReference>
<dbReference type="NCBIfam" id="TIGR00089">
    <property type="entry name" value="MiaB/RimO family radical SAM methylthiotransferase"/>
    <property type="match status" value="1"/>
</dbReference>
<dbReference type="PANTHER" id="PTHR43837">
    <property type="entry name" value="RIBOSOMAL PROTEIN S12 METHYLTHIOTRANSFERASE RIMO"/>
    <property type="match status" value="1"/>
</dbReference>
<dbReference type="PANTHER" id="PTHR43837:SF1">
    <property type="entry name" value="RIBOSOMAL PROTEIN US12 METHYLTHIOTRANSFERASE RIMO"/>
    <property type="match status" value="1"/>
</dbReference>
<dbReference type="Pfam" id="PF04055">
    <property type="entry name" value="Radical_SAM"/>
    <property type="match status" value="1"/>
</dbReference>
<dbReference type="Pfam" id="PF18693">
    <property type="entry name" value="TRAM_2"/>
    <property type="match status" value="1"/>
</dbReference>
<dbReference type="Pfam" id="PF00919">
    <property type="entry name" value="UPF0004"/>
    <property type="match status" value="1"/>
</dbReference>
<dbReference type="SFLD" id="SFLDG01082">
    <property type="entry name" value="B12-binding_domain_containing"/>
    <property type="match status" value="1"/>
</dbReference>
<dbReference type="SFLD" id="SFLDS00029">
    <property type="entry name" value="Radical_SAM"/>
    <property type="match status" value="1"/>
</dbReference>
<dbReference type="SFLD" id="SFLDF00274">
    <property type="entry name" value="ribosomal_protein_S12_methylth"/>
    <property type="match status" value="1"/>
</dbReference>
<dbReference type="SMART" id="SM00729">
    <property type="entry name" value="Elp3"/>
    <property type="match status" value="1"/>
</dbReference>
<dbReference type="SUPFAM" id="SSF102114">
    <property type="entry name" value="Radical SAM enzymes"/>
    <property type="match status" value="1"/>
</dbReference>
<dbReference type="PROSITE" id="PS51449">
    <property type="entry name" value="MTTASE_N"/>
    <property type="match status" value="1"/>
</dbReference>
<dbReference type="PROSITE" id="PS01278">
    <property type="entry name" value="MTTASE_RADICAL"/>
    <property type="match status" value="1"/>
</dbReference>
<dbReference type="PROSITE" id="PS51918">
    <property type="entry name" value="RADICAL_SAM"/>
    <property type="match status" value="1"/>
</dbReference>
<dbReference type="PROSITE" id="PS50926">
    <property type="entry name" value="TRAM"/>
    <property type="match status" value="1"/>
</dbReference>
<feature type="chain" id="PRO_0000374955" description="Ribosomal protein uS12 methylthiotransferase RimO">
    <location>
        <begin position="1"/>
        <end position="443"/>
    </location>
</feature>
<feature type="domain" description="MTTase N-terminal" evidence="1">
    <location>
        <begin position="6"/>
        <end position="116"/>
    </location>
</feature>
<feature type="domain" description="Radical SAM core" evidence="2">
    <location>
        <begin position="135"/>
        <end position="373"/>
    </location>
</feature>
<feature type="domain" description="TRAM" evidence="1">
    <location>
        <begin position="376"/>
        <end position="443"/>
    </location>
</feature>
<feature type="binding site" evidence="1">
    <location>
        <position position="15"/>
    </location>
    <ligand>
        <name>[4Fe-4S] cluster</name>
        <dbReference type="ChEBI" id="CHEBI:49883"/>
        <label>1</label>
    </ligand>
</feature>
<feature type="binding site" evidence="1">
    <location>
        <position position="51"/>
    </location>
    <ligand>
        <name>[4Fe-4S] cluster</name>
        <dbReference type="ChEBI" id="CHEBI:49883"/>
        <label>1</label>
    </ligand>
</feature>
<feature type="binding site" evidence="1">
    <location>
        <position position="80"/>
    </location>
    <ligand>
        <name>[4Fe-4S] cluster</name>
        <dbReference type="ChEBI" id="CHEBI:49883"/>
        <label>1</label>
    </ligand>
</feature>
<feature type="binding site" evidence="1">
    <location>
        <position position="149"/>
    </location>
    <ligand>
        <name>[4Fe-4S] cluster</name>
        <dbReference type="ChEBI" id="CHEBI:49883"/>
        <label>2</label>
        <note>4Fe-4S-S-AdoMet</note>
    </ligand>
</feature>
<feature type="binding site" evidence="1">
    <location>
        <position position="153"/>
    </location>
    <ligand>
        <name>[4Fe-4S] cluster</name>
        <dbReference type="ChEBI" id="CHEBI:49883"/>
        <label>2</label>
        <note>4Fe-4S-S-AdoMet</note>
    </ligand>
</feature>
<feature type="binding site" evidence="1">
    <location>
        <position position="156"/>
    </location>
    <ligand>
        <name>[4Fe-4S] cluster</name>
        <dbReference type="ChEBI" id="CHEBI:49883"/>
        <label>2</label>
        <note>4Fe-4S-S-AdoMet</note>
    </ligand>
</feature>